<name>MUTS2_STRA1</name>
<sequence>MNNKILEQLEFNKVKELILPYLKTEQSQEELSELEPMTEAPKIEKSFNEISDMEQIFVEHHSFGIVSLSSISESLKRLELSADLNIQELLAIKKVLQSSSDMIHFYSDLDNVSFQSLDRLFENLEQFPNLQGSFQAINDGGFLEHFASPELERIRRQLTNSERRVRQILQDMLKEKAELLSENLIASRSGRSVLPVKNTYRNRISGVVHDISSSGSTVYIEPRAVVTLNEEITQLRADERHEESRILHAFSDLLRPHVATIRNNAWILGHLDFVRAKYLFMSDNKATIPEISNDSTLALINVRHPLLSNPVANDLHFDQDLTAIVITGPNTGGKTIMLKTLGLAQLMGQSGLPVLADKGSKIAVFNNIFADIGDEQSIEQSLSTFSSHMTHIVSILNEADHNSLVLFDELGAGTDPQEGASLAMAILEHLRLSNIKTMATTHYPELKAYGIETNFVENASMEFDAETLSPTYRFMQGVPGRSNAFEIASRLGLAPFIVKQAKQMTDSDSDVNRIIEQLEAQTLETRRRLDHIKEVEQENLKFNRAVKKLYNEFSHERDKELEKIYQEAQEIVDMALNESDTILKKLNDKSQLKPHEIIDAKAQIKKLAPQVDLSKNKVLNKAKKIKAARAPRIGDDIIVTSYGQRGTLTSQLKDGRWEAQVGIIKMTLTQDEFTLVRVQEEQKVKSKQINVVKKADSSGPRARLDLRGKRYEEAMQELDNFIDQALLNNMGQVDIIHGIGTGVIREGVTKYLRRNKHVKHFAYAPQNAGGSGATIVTLG</sequence>
<keyword id="KW-0067">ATP-binding</keyword>
<keyword id="KW-0238">DNA-binding</keyword>
<keyword id="KW-0255">Endonuclease</keyword>
<keyword id="KW-0378">Hydrolase</keyword>
<keyword id="KW-0540">Nuclease</keyword>
<keyword id="KW-0547">Nucleotide-binding</keyword>
<keyword id="KW-0694">RNA-binding</keyword>
<keyword id="KW-0699">rRNA-binding</keyword>
<dbReference type="EC" id="3.1.-.-" evidence="1"/>
<dbReference type="EC" id="3.6.4.-" evidence="1"/>
<dbReference type="EMBL" id="CP000114">
    <property type="protein sequence ID" value="ABA44913.1"/>
    <property type="molecule type" value="Genomic_DNA"/>
</dbReference>
<dbReference type="RefSeq" id="WP_001060323.1">
    <property type="nucleotide sequence ID" value="NC_007432.1"/>
</dbReference>
<dbReference type="SMR" id="Q3JZH6"/>
<dbReference type="KEGG" id="sak:SAK_1727"/>
<dbReference type="HOGENOM" id="CLU_011252_2_1_9"/>
<dbReference type="GO" id="GO:0005524">
    <property type="term" value="F:ATP binding"/>
    <property type="evidence" value="ECO:0007669"/>
    <property type="project" value="UniProtKB-UniRule"/>
</dbReference>
<dbReference type="GO" id="GO:0016887">
    <property type="term" value="F:ATP hydrolysis activity"/>
    <property type="evidence" value="ECO:0007669"/>
    <property type="project" value="InterPro"/>
</dbReference>
<dbReference type="GO" id="GO:0140664">
    <property type="term" value="F:ATP-dependent DNA damage sensor activity"/>
    <property type="evidence" value="ECO:0007669"/>
    <property type="project" value="InterPro"/>
</dbReference>
<dbReference type="GO" id="GO:0004519">
    <property type="term" value="F:endonuclease activity"/>
    <property type="evidence" value="ECO:0007669"/>
    <property type="project" value="UniProtKB-UniRule"/>
</dbReference>
<dbReference type="GO" id="GO:0030983">
    <property type="term" value="F:mismatched DNA binding"/>
    <property type="evidence" value="ECO:0007669"/>
    <property type="project" value="InterPro"/>
</dbReference>
<dbReference type="GO" id="GO:0043023">
    <property type="term" value="F:ribosomal large subunit binding"/>
    <property type="evidence" value="ECO:0007669"/>
    <property type="project" value="UniProtKB-UniRule"/>
</dbReference>
<dbReference type="GO" id="GO:0019843">
    <property type="term" value="F:rRNA binding"/>
    <property type="evidence" value="ECO:0007669"/>
    <property type="project" value="UniProtKB-UniRule"/>
</dbReference>
<dbReference type="GO" id="GO:0006298">
    <property type="term" value="P:mismatch repair"/>
    <property type="evidence" value="ECO:0007669"/>
    <property type="project" value="InterPro"/>
</dbReference>
<dbReference type="GO" id="GO:0045910">
    <property type="term" value="P:negative regulation of DNA recombination"/>
    <property type="evidence" value="ECO:0007669"/>
    <property type="project" value="InterPro"/>
</dbReference>
<dbReference type="GO" id="GO:0072344">
    <property type="term" value="P:rescue of stalled ribosome"/>
    <property type="evidence" value="ECO:0007669"/>
    <property type="project" value="UniProtKB-UniRule"/>
</dbReference>
<dbReference type="CDD" id="cd03280">
    <property type="entry name" value="ABC_MutS2"/>
    <property type="match status" value="1"/>
</dbReference>
<dbReference type="FunFam" id="3.40.50.300:FF:000830">
    <property type="entry name" value="Endonuclease MutS2"/>
    <property type="match status" value="1"/>
</dbReference>
<dbReference type="Gene3D" id="1.10.1420.10">
    <property type="match status" value="2"/>
</dbReference>
<dbReference type="Gene3D" id="3.30.1370.110">
    <property type="match status" value="1"/>
</dbReference>
<dbReference type="Gene3D" id="3.40.50.300">
    <property type="entry name" value="P-loop containing nucleotide triphosphate hydrolases"/>
    <property type="match status" value="1"/>
</dbReference>
<dbReference type="HAMAP" id="MF_00092">
    <property type="entry name" value="MutS2"/>
    <property type="match status" value="1"/>
</dbReference>
<dbReference type="InterPro" id="IPR000432">
    <property type="entry name" value="DNA_mismatch_repair_MutS_C"/>
</dbReference>
<dbReference type="InterPro" id="IPR007696">
    <property type="entry name" value="DNA_mismatch_repair_MutS_core"/>
</dbReference>
<dbReference type="InterPro" id="IPR036187">
    <property type="entry name" value="DNA_mismatch_repair_MutS_sf"/>
</dbReference>
<dbReference type="InterPro" id="IPR046893">
    <property type="entry name" value="MSSS"/>
</dbReference>
<dbReference type="InterPro" id="IPR045076">
    <property type="entry name" value="MutS"/>
</dbReference>
<dbReference type="InterPro" id="IPR005747">
    <property type="entry name" value="MutS2"/>
</dbReference>
<dbReference type="InterPro" id="IPR027417">
    <property type="entry name" value="P-loop_NTPase"/>
</dbReference>
<dbReference type="InterPro" id="IPR002625">
    <property type="entry name" value="Smr_dom"/>
</dbReference>
<dbReference type="InterPro" id="IPR036063">
    <property type="entry name" value="Smr_dom_sf"/>
</dbReference>
<dbReference type="NCBIfam" id="TIGR01069">
    <property type="entry name" value="mutS2"/>
    <property type="match status" value="1"/>
</dbReference>
<dbReference type="PANTHER" id="PTHR48466:SF2">
    <property type="entry name" value="OS10G0509000 PROTEIN"/>
    <property type="match status" value="1"/>
</dbReference>
<dbReference type="PANTHER" id="PTHR48466">
    <property type="entry name" value="OS10G0509000 PROTEIN-RELATED"/>
    <property type="match status" value="1"/>
</dbReference>
<dbReference type="Pfam" id="PF20297">
    <property type="entry name" value="MSSS"/>
    <property type="match status" value="1"/>
</dbReference>
<dbReference type="Pfam" id="PF00488">
    <property type="entry name" value="MutS_V"/>
    <property type="match status" value="1"/>
</dbReference>
<dbReference type="Pfam" id="PF01713">
    <property type="entry name" value="Smr"/>
    <property type="match status" value="1"/>
</dbReference>
<dbReference type="PIRSF" id="PIRSF005814">
    <property type="entry name" value="MutS_YshD"/>
    <property type="match status" value="1"/>
</dbReference>
<dbReference type="SMART" id="SM00534">
    <property type="entry name" value="MUTSac"/>
    <property type="match status" value="1"/>
</dbReference>
<dbReference type="SMART" id="SM00533">
    <property type="entry name" value="MUTSd"/>
    <property type="match status" value="1"/>
</dbReference>
<dbReference type="SMART" id="SM00463">
    <property type="entry name" value="SMR"/>
    <property type="match status" value="1"/>
</dbReference>
<dbReference type="SUPFAM" id="SSF48334">
    <property type="entry name" value="DNA repair protein MutS, domain III"/>
    <property type="match status" value="1"/>
</dbReference>
<dbReference type="SUPFAM" id="SSF52540">
    <property type="entry name" value="P-loop containing nucleoside triphosphate hydrolases"/>
    <property type="match status" value="1"/>
</dbReference>
<dbReference type="SUPFAM" id="SSF160443">
    <property type="entry name" value="SMR domain-like"/>
    <property type="match status" value="1"/>
</dbReference>
<dbReference type="PROSITE" id="PS00486">
    <property type="entry name" value="DNA_MISMATCH_REPAIR_2"/>
    <property type="match status" value="1"/>
</dbReference>
<dbReference type="PROSITE" id="PS50828">
    <property type="entry name" value="SMR"/>
    <property type="match status" value="1"/>
</dbReference>
<comment type="function">
    <text evidence="1">Endonuclease that is involved in the suppression of homologous recombination and thus may have a key role in the control of bacterial genetic diversity.</text>
</comment>
<comment type="function">
    <text evidence="1">Acts as a ribosome collision sensor, splitting the ribosome into its 2 subunits. Detects stalled/collided 70S ribosomes which it binds and splits by an ATP-hydrolysis driven conformational change. Acts upstream of the ribosome quality control system (RQC), a ribosome-associated complex that mediates the extraction of incompletely synthesized nascent chains from stalled ribosomes and their subsequent degradation. Probably generates substrates for RQC.</text>
</comment>
<comment type="subunit">
    <text evidence="1">Homodimer. Binds to stalled ribosomes, contacting rRNA.</text>
</comment>
<comment type="similarity">
    <text evidence="1">Belongs to the DNA mismatch repair MutS family. MutS2 subfamily.</text>
</comment>
<reference key="1">
    <citation type="journal article" date="2005" name="Proc. Natl. Acad. Sci. U.S.A.">
        <title>Genome analysis of multiple pathogenic isolates of Streptococcus agalactiae: implications for the microbial 'pan-genome'.</title>
        <authorList>
            <person name="Tettelin H."/>
            <person name="Masignani V."/>
            <person name="Cieslewicz M.J."/>
            <person name="Donati C."/>
            <person name="Medini D."/>
            <person name="Ward N.L."/>
            <person name="Angiuoli S.V."/>
            <person name="Crabtree J."/>
            <person name="Jones A.L."/>
            <person name="Durkin A.S."/>
            <person name="DeBoy R.T."/>
            <person name="Davidsen T.M."/>
            <person name="Mora M."/>
            <person name="Scarselli M."/>
            <person name="Margarit y Ros I."/>
            <person name="Peterson J.D."/>
            <person name="Hauser C.R."/>
            <person name="Sundaram J.P."/>
            <person name="Nelson W.C."/>
            <person name="Madupu R."/>
            <person name="Brinkac L.M."/>
            <person name="Dodson R.J."/>
            <person name="Rosovitz M.J."/>
            <person name="Sullivan S.A."/>
            <person name="Daugherty S.C."/>
            <person name="Haft D.H."/>
            <person name="Selengut J."/>
            <person name="Gwinn M.L."/>
            <person name="Zhou L."/>
            <person name="Zafar N."/>
            <person name="Khouri H."/>
            <person name="Radune D."/>
            <person name="Dimitrov G."/>
            <person name="Watkins K."/>
            <person name="O'Connor K.J."/>
            <person name="Smith S."/>
            <person name="Utterback T.R."/>
            <person name="White O."/>
            <person name="Rubens C.E."/>
            <person name="Grandi G."/>
            <person name="Madoff L.C."/>
            <person name="Kasper D.L."/>
            <person name="Telford J.L."/>
            <person name="Wessels M.R."/>
            <person name="Rappuoli R."/>
            <person name="Fraser C.M."/>
        </authorList>
    </citation>
    <scope>NUCLEOTIDE SEQUENCE [LARGE SCALE GENOMIC DNA]</scope>
    <source>
        <strain>ATCC 27591 / A909 / CDC SS700</strain>
    </source>
</reference>
<organism>
    <name type="scientific">Streptococcus agalactiae serotype Ia (strain ATCC 27591 / A909 / CDC SS700)</name>
    <dbReference type="NCBI Taxonomy" id="205921"/>
    <lineage>
        <taxon>Bacteria</taxon>
        <taxon>Bacillati</taxon>
        <taxon>Bacillota</taxon>
        <taxon>Bacilli</taxon>
        <taxon>Lactobacillales</taxon>
        <taxon>Streptococcaceae</taxon>
        <taxon>Streptococcus</taxon>
    </lineage>
</organism>
<accession>Q3JZH6</accession>
<protein>
    <recommendedName>
        <fullName evidence="1">Endonuclease MutS2</fullName>
        <ecNumber evidence="1">3.1.-.-</ecNumber>
    </recommendedName>
    <alternativeName>
        <fullName evidence="1">Ribosome-associated protein quality control-upstream factor</fullName>
        <shortName evidence="1">RQC-upstream factor</shortName>
        <shortName evidence="1">RqcU</shortName>
        <ecNumber evidence="1">3.6.4.-</ecNumber>
    </alternativeName>
</protein>
<evidence type="ECO:0000255" key="1">
    <source>
        <dbReference type="HAMAP-Rule" id="MF_00092"/>
    </source>
</evidence>
<feature type="chain" id="PRO_1000093386" description="Endonuclease MutS2">
    <location>
        <begin position="1"/>
        <end position="779"/>
    </location>
</feature>
<feature type="domain" description="Smr" evidence="1">
    <location>
        <begin position="704"/>
        <end position="779"/>
    </location>
</feature>
<feature type="binding site" evidence="1">
    <location>
        <begin position="328"/>
        <end position="335"/>
    </location>
    <ligand>
        <name>ATP</name>
        <dbReference type="ChEBI" id="CHEBI:30616"/>
    </ligand>
</feature>
<gene>
    <name evidence="1" type="primary">mutS2</name>
    <name evidence="1" type="synonym">rqcU</name>
    <name type="ordered locus">SAK_1727</name>
</gene>
<proteinExistence type="inferred from homology"/>